<feature type="chain" id="PRO_0000357767" description="NADH-quinone oxidoreductase subunit D">
    <location>
        <begin position="1"/>
        <end position="366"/>
    </location>
</feature>
<reference key="1">
    <citation type="journal article" date="2008" name="Chem. Biol. Interact.">
        <title>Extending the Bacillus cereus group genomics to putative food-borne pathogens of different toxicity.</title>
        <authorList>
            <person name="Lapidus A."/>
            <person name="Goltsman E."/>
            <person name="Auger S."/>
            <person name="Galleron N."/>
            <person name="Segurens B."/>
            <person name="Dossat C."/>
            <person name="Land M.L."/>
            <person name="Broussolle V."/>
            <person name="Brillard J."/>
            <person name="Guinebretiere M.-H."/>
            <person name="Sanchis V."/>
            <person name="Nguen-the C."/>
            <person name="Lereclus D."/>
            <person name="Richardson P."/>
            <person name="Wincker P."/>
            <person name="Weissenbach J."/>
            <person name="Ehrlich S.D."/>
            <person name="Sorokin A."/>
        </authorList>
    </citation>
    <scope>NUCLEOTIDE SEQUENCE [LARGE SCALE GENOMIC DNA]</scope>
    <source>
        <strain>DSM 22905 / CIP 110041 / 391-98 / NVH 391-98</strain>
    </source>
</reference>
<name>NUOD_BACCN</name>
<organism>
    <name type="scientific">Bacillus cytotoxicus (strain DSM 22905 / CIP 110041 / 391-98 / NVH 391-98)</name>
    <dbReference type="NCBI Taxonomy" id="315749"/>
    <lineage>
        <taxon>Bacteria</taxon>
        <taxon>Bacillati</taxon>
        <taxon>Bacillota</taxon>
        <taxon>Bacilli</taxon>
        <taxon>Bacillales</taxon>
        <taxon>Bacillaceae</taxon>
        <taxon>Bacillus</taxon>
        <taxon>Bacillus cereus group</taxon>
    </lineage>
</organism>
<protein>
    <recommendedName>
        <fullName evidence="1">NADH-quinone oxidoreductase subunit D</fullName>
        <ecNumber evidence="1">7.1.1.-</ecNumber>
    </recommendedName>
    <alternativeName>
        <fullName evidence="1">NADH dehydrogenase I subunit D</fullName>
    </alternativeName>
    <alternativeName>
        <fullName evidence="1">NDH-1 subunit D</fullName>
    </alternativeName>
</protein>
<sequence>MIRTEEMLLNVGPQHPSTHGVFRLIIKIDGETIKEATPVIGYLHRGTEKIAESLQYTQIIPYTDRMDYLSAMTNNYVICHAVETMMGLEIPERAEYLRVLAMELGRVASHLVWWGTNLLDIGAVSPFLYAFREREMVINLLNELCGARLTFNYMRVGGVKWDAPDGWIQKVREFVPYMKEQLKGYHDLVSGNEIFVNRVKGIGIYSAEEAISYSLSGANLRCTGVKWDIRKDEPYSIYNQFDFDVPVGEVGDAWDRYMCRMAEIEESLKIIEQAAEQFPKEGSVMAKVPRIIKVPKGEAFVRIESPRGEIGCYIASEGKKEPYRLKFRRPSFYNLQILPKLLKGENIANLITILGGVDIVLGEVDG</sequence>
<comment type="function">
    <text evidence="1">NDH-1 shuttles electrons from NADH, via FMN and iron-sulfur (Fe-S) centers, to quinones in the respiratory chain. The immediate electron acceptor for the enzyme in this species is believed to be a menaquinone. Couples the redox reaction to proton translocation (for every two electrons transferred, four hydrogen ions are translocated across the cytoplasmic membrane), and thus conserves the redox energy in a proton gradient.</text>
</comment>
<comment type="catalytic activity">
    <reaction evidence="1">
        <text>a quinone + NADH + 5 H(+)(in) = a quinol + NAD(+) + 4 H(+)(out)</text>
        <dbReference type="Rhea" id="RHEA:57888"/>
        <dbReference type="ChEBI" id="CHEBI:15378"/>
        <dbReference type="ChEBI" id="CHEBI:24646"/>
        <dbReference type="ChEBI" id="CHEBI:57540"/>
        <dbReference type="ChEBI" id="CHEBI:57945"/>
        <dbReference type="ChEBI" id="CHEBI:132124"/>
    </reaction>
</comment>
<comment type="subunit">
    <text evidence="1">NDH-1 is composed of 14 different subunits. Subunits NuoB, C, D, E, F, and G constitute the peripheral sector of the complex.</text>
</comment>
<comment type="subcellular location">
    <subcellularLocation>
        <location evidence="1">Cell membrane</location>
        <topology evidence="1">Peripheral membrane protein</topology>
        <orientation evidence="1">Cytoplasmic side</orientation>
    </subcellularLocation>
</comment>
<comment type="similarity">
    <text evidence="1">Belongs to the complex I 49 kDa subunit family.</text>
</comment>
<evidence type="ECO:0000255" key="1">
    <source>
        <dbReference type="HAMAP-Rule" id="MF_01358"/>
    </source>
</evidence>
<gene>
    <name evidence="1" type="primary">nuoD</name>
    <name type="ordered locus">Bcer98_3816</name>
</gene>
<accession>A7GV48</accession>
<dbReference type="EC" id="7.1.1.-" evidence="1"/>
<dbReference type="EMBL" id="CP000764">
    <property type="protein sequence ID" value="ABS24006.1"/>
    <property type="molecule type" value="Genomic_DNA"/>
</dbReference>
<dbReference type="RefSeq" id="WP_012096264.1">
    <property type="nucleotide sequence ID" value="NC_009674.1"/>
</dbReference>
<dbReference type="SMR" id="A7GV48"/>
<dbReference type="STRING" id="315749.Bcer98_3816"/>
<dbReference type="GeneID" id="33899057"/>
<dbReference type="KEGG" id="bcy:Bcer98_3816"/>
<dbReference type="eggNOG" id="COG0649">
    <property type="taxonomic scope" value="Bacteria"/>
</dbReference>
<dbReference type="HOGENOM" id="CLU_015134_1_2_9"/>
<dbReference type="OrthoDB" id="9801496at2"/>
<dbReference type="Proteomes" id="UP000002300">
    <property type="component" value="Chromosome"/>
</dbReference>
<dbReference type="GO" id="GO:0005886">
    <property type="term" value="C:plasma membrane"/>
    <property type="evidence" value="ECO:0007669"/>
    <property type="project" value="UniProtKB-SubCell"/>
</dbReference>
<dbReference type="GO" id="GO:0051287">
    <property type="term" value="F:NAD binding"/>
    <property type="evidence" value="ECO:0007669"/>
    <property type="project" value="InterPro"/>
</dbReference>
<dbReference type="GO" id="GO:0050136">
    <property type="term" value="F:NADH:ubiquinone reductase (non-electrogenic) activity"/>
    <property type="evidence" value="ECO:0007669"/>
    <property type="project" value="UniProtKB-UniRule"/>
</dbReference>
<dbReference type="GO" id="GO:0048038">
    <property type="term" value="F:quinone binding"/>
    <property type="evidence" value="ECO:0007669"/>
    <property type="project" value="UniProtKB-KW"/>
</dbReference>
<dbReference type="FunFam" id="1.10.645.10:FF:000006">
    <property type="entry name" value="NADH-quinone oxidoreductase subunit D"/>
    <property type="match status" value="1"/>
</dbReference>
<dbReference type="Gene3D" id="1.10.645.10">
    <property type="entry name" value="Cytochrome-c3 Hydrogenase, chain B"/>
    <property type="match status" value="1"/>
</dbReference>
<dbReference type="HAMAP" id="MF_01358">
    <property type="entry name" value="NDH1_NuoD"/>
    <property type="match status" value="1"/>
</dbReference>
<dbReference type="InterPro" id="IPR001135">
    <property type="entry name" value="NADH_Q_OxRdtase_suD"/>
</dbReference>
<dbReference type="InterPro" id="IPR022885">
    <property type="entry name" value="NDH1_su_D/H"/>
</dbReference>
<dbReference type="InterPro" id="IPR029014">
    <property type="entry name" value="NiFe-Hase_large"/>
</dbReference>
<dbReference type="NCBIfam" id="NF004739">
    <property type="entry name" value="PRK06075.1"/>
    <property type="match status" value="1"/>
</dbReference>
<dbReference type="NCBIfam" id="NF008974">
    <property type="entry name" value="PRK12322.1"/>
    <property type="match status" value="1"/>
</dbReference>
<dbReference type="PANTHER" id="PTHR11993:SF10">
    <property type="entry name" value="NADH DEHYDROGENASE [UBIQUINONE] IRON-SULFUR PROTEIN 2, MITOCHONDRIAL"/>
    <property type="match status" value="1"/>
</dbReference>
<dbReference type="PANTHER" id="PTHR11993">
    <property type="entry name" value="NADH-UBIQUINONE OXIDOREDUCTASE 49 KDA SUBUNIT"/>
    <property type="match status" value="1"/>
</dbReference>
<dbReference type="Pfam" id="PF00346">
    <property type="entry name" value="Complex1_49kDa"/>
    <property type="match status" value="2"/>
</dbReference>
<dbReference type="SUPFAM" id="SSF56762">
    <property type="entry name" value="HydB/Nqo4-like"/>
    <property type="match status" value="1"/>
</dbReference>
<proteinExistence type="inferred from homology"/>
<keyword id="KW-1003">Cell membrane</keyword>
<keyword id="KW-0472">Membrane</keyword>
<keyword id="KW-0520">NAD</keyword>
<keyword id="KW-0874">Quinone</keyword>
<keyword id="KW-1278">Translocase</keyword>
<keyword id="KW-0813">Transport</keyword>